<proteinExistence type="evidence at protein level"/>
<dbReference type="EMBL" id="AL596125">
    <property type="status" value="NOT_ANNOTATED_CDS"/>
    <property type="molecule type" value="Genomic_DNA"/>
</dbReference>
<dbReference type="EMBL" id="AL731687">
    <property type="status" value="NOT_ANNOTATED_CDS"/>
    <property type="molecule type" value="Genomic_DNA"/>
</dbReference>
<dbReference type="EMBL" id="Z83813">
    <property type="protein sequence ID" value="CAB06067.1"/>
    <property type="molecule type" value="mRNA"/>
</dbReference>
<dbReference type="EMBL" id="AK029791">
    <property type="protein sequence ID" value="BAC26619.1"/>
    <property type="status" value="ALT_INIT"/>
    <property type="molecule type" value="mRNA"/>
</dbReference>
<dbReference type="SMR" id="P0C6F1"/>
<dbReference type="FunCoup" id="P0C6F1">
    <property type="interactions" value="207"/>
</dbReference>
<dbReference type="IntAct" id="P0C6F1">
    <property type="interactions" value="1"/>
</dbReference>
<dbReference type="STRING" id="10090.ENSMUSP00000104299"/>
<dbReference type="GlyGen" id="P0C6F1">
    <property type="glycosylation" value="3 sites"/>
</dbReference>
<dbReference type="iPTMnet" id="P0C6F1"/>
<dbReference type="PhosphoSitePlus" id="P0C6F1"/>
<dbReference type="jPOST" id="P0C6F1"/>
<dbReference type="PaxDb" id="10090-ENSMUSP00000104299"/>
<dbReference type="ProteomicsDB" id="277643"/>
<dbReference type="Antibodypedia" id="66685">
    <property type="antibodies" value="64 antibodies from 18 providers"/>
</dbReference>
<dbReference type="Ensembl" id="ENSMUST00000035539.12">
    <property type="protein sequence ID" value="ENSMUSP00000047329.6"/>
    <property type="gene ID" value="ENSMUSG00000005237.15"/>
</dbReference>
<dbReference type="AGR" id="MGI:107731"/>
<dbReference type="MGI" id="MGI:107731">
    <property type="gene designation" value="Dnah2"/>
</dbReference>
<dbReference type="VEuPathDB" id="HostDB:ENSMUSG00000005237"/>
<dbReference type="eggNOG" id="KOG3595">
    <property type="taxonomic scope" value="Eukaryota"/>
</dbReference>
<dbReference type="GeneTree" id="ENSGT00940000157623"/>
<dbReference type="HOGENOM" id="CLU_000038_9_0_1"/>
<dbReference type="InParanoid" id="P0C6F1"/>
<dbReference type="ChiTaRS" id="Dnah2">
    <property type="organism name" value="mouse"/>
</dbReference>
<dbReference type="PRO" id="PR:P0C6F1"/>
<dbReference type="Proteomes" id="UP000000589">
    <property type="component" value="Chromosome 11"/>
</dbReference>
<dbReference type="RNAct" id="P0C6F1">
    <property type="molecule type" value="protein"/>
</dbReference>
<dbReference type="Bgee" id="ENSMUSG00000005237">
    <property type="expression patterns" value="Expressed in spermatocyte and 79 other cell types or tissues"/>
</dbReference>
<dbReference type="ExpressionAtlas" id="P0C6F1">
    <property type="expression patterns" value="baseline and differential"/>
</dbReference>
<dbReference type="GO" id="GO:0005858">
    <property type="term" value="C:axonemal dynein complex"/>
    <property type="evidence" value="ECO:0000314"/>
    <property type="project" value="UniProtKB"/>
</dbReference>
<dbReference type="GO" id="GO:0005930">
    <property type="term" value="C:axoneme"/>
    <property type="evidence" value="ECO:0000250"/>
    <property type="project" value="UniProtKB"/>
</dbReference>
<dbReference type="GO" id="GO:0005929">
    <property type="term" value="C:cilium"/>
    <property type="evidence" value="ECO:0000314"/>
    <property type="project" value="UniProtKB"/>
</dbReference>
<dbReference type="GO" id="GO:0036156">
    <property type="term" value="C:inner dynein arm"/>
    <property type="evidence" value="ECO:0000255"/>
    <property type="project" value="MGI"/>
</dbReference>
<dbReference type="GO" id="GO:0005874">
    <property type="term" value="C:microtubule"/>
    <property type="evidence" value="ECO:0007669"/>
    <property type="project" value="UniProtKB-KW"/>
</dbReference>
<dbReference type="GO" id="GO:0031514">
    <property type="term" value="C:motile cilium"/>
    <property type="evidence" value="ECO:0000314"/>
    <property type="project" value="MGI"/>
</dbReference>
<dbReference type="GO" id="GO:0036126">
    <property type="term" value="C:sperm flagellum"/>
    <property type="evidence" value="ECO:0000250"/>
    <property type="project" value="UniProtKB"/>
</dbReference>
<dbReference type="GO" id="GO:0005524">
    <property type="term" value="F:ATP binding"/>
    <property type="evidence" value="ECO:0007669"/>
    <property type="project" value="UniProtKB-KW"/>
</dbReference>
<dbReference type="GO" id="GO:0016887">
    <property type="term" value="F:ATP hydrolysis activity"/>
    <property type="evidence" value="ECO:0007669"/>
    <property type="project" value="InterPro"/>
</dbReference>
<dbReference type="GO" id="GO:0045505">
    <property type="term" value="F:dynein intermediate chain binding"/>
    <property type="evidence" value="ECO:0007669"/>
    <property type="project" value="InterPro"/>
</dbReference>
<dbReference type="GO" id="GO:0051959">
    <property type="term" value="F:dynein light intermediate chain binding"/>
    <property type="evidence" value="ECO:0007669"/>
    <property type="project" value="InterPro"/>
</dbReference>
<dbReference type="GO" id="GO:0008569">
    <property type="term" value="F:minus-end-directed microtubule motor activity"/>
    <property type="evidence" value="ECO:0007669"/>
    <property type="project" value="InterPro"/>
</dbReference>
<dbReference type="GO" id="GO:0003341">
    <property type="term" value="P:cilium movement"/>
    <property type="evidence" value="ECO:0000315"/>
    <property type="project" value="UniProtKB"/>
</dbReference>
<dbReference type="GO" id="GO:0060285">
    <property type="term" value="P:cilium-dependent cell motility"/>
    <property type="evidence" value="ECO:0000250"/>
    <property type="project" value="UniProtKB"/>
</dbReference>
<dbReference type="GO" id="GO:0036159">
    <property type="term" value="P:inner dynein arm assembly"/>
    <property type="evidence" value="ECO:0000250"/>
    <property type="project" value="UniProtKB"/>
</dbReference>
<dbReference type="CDD" id="cd00009">
    <property type="entry name" value="AAA"/>
    <property type="match status" value="1"/>
</dbReference>
<dbReference type="FunFam" id="3.40.50.300:FF:000153">
    <property type="entry name" value="Dynein axonemal heavy chain 1"/>
    <property type="match status" value="1"/>
</dbReference>
<dbReference type="FunFam" id="1.10.8.710:FF:000001">
    <property type="entry name" value="Dynein axonemal heavy chain 2"/>
    <property type="match status" value="1"/>
</dbReference>
<dbReference type="FunFam" id="1.10.8.720:FF:000008">
    <property type="entry name" value="Dynein axonemal heavy chain 2"/>
    <property type="match status" value="1"/>
</dbReference>
<dbReference type="FunFam" id="1.10.8.1220:FF:000001">
    <property type="entry name" value="Dynein axonemal heavy chain 5"/>
    <property type="match status" value="1"/>
</dbReference>
<dbReference type="FunFam" id="3.40.50.300:FF:002141">
    <property type="entry name" value="Dynein heavy chain"/>
    <property type="match status" value="1"/>
</dbReference>
<dbReference type="FunFam" id="3.20.180.20:FF:000003">
    <property type="entry name" value="Dynein heavy chain 12, axonemal"/>
    <property type="match status" value="1"/>
</dbReference>
<dbReference type="FunFam" id="1.10.287.2620:FF:000002">
    <property type="entry name" value="Dynein heavy chain 2, axonemal"/>
    <property type="match status" value="1"/>
</dbReference>
<dbReference type="FunFam" id="3.40.50.300:FF:000815">
    <property type="entry name" value="Dynein heavy chain 2, axonemal"/>
    <property type="match status" value="1"/>
</dbReference>
<dbReference type="FunFam" id="1.20.1270.280:FF:000007">
    <property type="entry name" value="dynein heavy chain 2, axonemal"/>
    <property type="match status" value="1"/>
</dbReference>
<dbReference type="FunFam" id="1.20.140.100:FF:000006">
    <property type="entry name" value="dynein heavy chain 2, axonemal"/>
    <property type="match status" value="1"/>
</dbReference>
<dbReference type="FunFam" id="1.20.920.20:FF:000014">
    <property type="entry name" value="dynein heavy chain 2, axonemal"/>
    <property type="match status" value="1"/>
</dbReference>
<dbReference type="FunFam" id="3.10.490.20:FF:000008">
    <property type="entry name" value="dynein heavy chain 2, axonemal"/>
    <property type="match status" value="1"/>
</dbReference>
<dbReference type="FunFam" id="3.40.50.300:FF:000044">
    <property type="entry name" value="Dynein heavy chain 5, axonemal"/>
    <property type="match status" value="1"/>
</dbReference>
<dbReference type="FunFam" id="1.10.472.130:FF:000003">
    <property type="entry name" value="Dynein, axonemal, heavy chain 2"/>
    <property type="match status" value="1"/>
</dbReference>
<dbReference type="FunFam" id="1.20.58.1120:FF:000012">
    <property type="entry name" value="Dynein, axonemal, heavy chain 2"/>
    <property type="match status" value="1"/>
</dbReference>
<dbReference type="FunFam" id="1.20.920.30:FF:000005">
    <property type="entry name" value="Dynein, axonemal, heavy chain 2"/>
    <property type="match status" value="1"/>
</dbReference>
<dbReference type="FunFam" id="3.40.50.300:FF:000049">
    <property type="entry name" value="Dynein, axonemal, heavy chain 5"/>
    <property type="match status" value="1"/>
</dbReference>
<dbReference type="Gene3D" id="1.10.287.2620">
    <property type="match status" value="1"/>
</dbReference>
<dbReference type="Gene3D" id="1.10.472.130">
    <property type="match status" value="1"/>
</dbReference>
<dbReference type="Gene3D" id="1.10.8.1220">
    <property type="match status" value="1"/>
</dbReference>
<dbReference type="Gene3D" id="1.10.8.710">
    <property type="match status" value="1"/>
</dbReference>
<dbReference type="Gene3D" id="1.20.1270.280">
    <property type="match status" value="1"/>
</dbReference>
<dbReference type="Gene3D" id="1.20.58.1120">
    <property type="match status" value="1"/>
</dbReference>
<dbReference type="Gene3D" id="1.20.920.20">
    <property type="match status" value="1"/>
</dbReference>
<dbReference type="Gene3D" id="1.20.920.30">
    <property type="match status" value="1"/>
</dbReference>
<dbReference type="Gene3D" id="3.10.490.20">
    <property type="match status" value="1"/>
</dbReference>
<dbReference type="Gene3D" id="6.10.140.1060">
    <property type="match status" value="1"/>
</dbReference>
<dbReference type="Gene3D" id="1.20.140.100">
    <property type="entry name" value="Dynein heavy chain, N-terminal domain 2"/>
    <property type="match status" value="1"/>
</dbReference>
<dbReference type="Gene3D" id="3.20.180.20">
    <property type="entry name" value="Dynein heavy chain, N-terminal domain 2"/>
    <property type="match status" value="1"/>
</dbReference>
<dbReference type="Gene3D" id="3.40.50.300">
    <property type="entry name" value="P-loop containing nucleotide triphosphate hydrolases"/>
    <property type="match status" value="5"/>
</dbReference>
<dbReference type="Gene3D" id="1.10.8.720">
    <property type="entry name" value="Region D6 of dynein motor"/>
    <property type="match status" value="1"/>
</dbReference>
<dbReference type="InterPro" id="IPR003593">
    <property type="entry name" value="AAA+_ATPase"/>
</dbReference>
<dbReference type="InterPro" id="IPR035699">
    <property type="entry name" value="AAA_6"/>
</dbReference>
<dbReference type="InterPro" id="IPR035706">
    <property type="entry name" value="AAA_9"/>
</dbReference>
<dbReference type="InterPro" id="IPR041658">
    <property type="entry name" value="AAA_lid_11"/>
</dbReference>
<dbReference type="InterPro" id="IPR042219">
    <property type="entry name" value="AAA_lid_11_sf"/>
</dbReference>
<dbReference type="InterPro" id="IPR026983">
    <property type="entry name" value="DHC"/>
</dbReference>
<dbReference type="InterPro" id="IPR041589">
    <property type="entry name" value="DNAH3_AAA_lid_1"/>
</dbReference>
<dbReference type="InterPro" id="IPR056759">
    <property type="entry name" value="DYH2-5-8_CC"/>
</dbReference>
<dbReference type="InterPro" id="IPR042222">
    <property type="entry name" value="Dynein_2_N"/>
</dbReference>
<dbReference type="InterPro" id="IPR043157">
    <property type="entry name" value="Dynein_AAA1S"/>
</dbReference>
<dbReference type="InterPro" id="IPR041466">
    <property type="entry name" value="Dynein_AAA5_ext"/>
</dbReference>
<dbReference type="InterPro" id="IPR041228">
    <property type="entry name" value="Dynein_C"/>
</dbReference>
<dbReference type="InterPro" id="IPR043160">
    <property type="entry name" value="Dynein_C_barrel"/>
</dbReference>
<dbReference type="InterPro" id="IPR024743">
    <property type="entry name" value="Dynein_HC_stalk"/>
</dbReference>
<dbReference type="InterPro" id="IPR024317">
    <property type="entry name" value="Dynein_heavy_chain_D4_dom"/>
</dbReference>
<dbReference type="InterPro" id="IPR004273">
    <property type="entry name" value="Dynein_heavy_D6_P-loop"/>
</dbReference>
<dbReference type="InterPro" id="IPR013602">
    <property type="entry name" value="Dynein_heavy_linker"/>
</dbReference>
<dbReference type="InterPro" id="IPR013594">
    <property type="entry name" value="Dynein_heavy_tail"/>
</dbReference>
<dbReference type="InterPro" id="IPR042228">
    <property type="entry name" value="Dynein_linker_3"/>
</dbReference>
<dbReference type="InterPro" id="IPR027417">
    <property type="entry name" value="P-loop_NTPase"/>
</dbReference>
<dbReference type="PANTHER" id="PTHR46532:SF11">
    <property type="entry name" value="DYNEIN AXONEMAL HEAVY CHAIN 12"/>
    <property type="match status" value="1"/>
</dbReference>
<dbReference type="PANTHER" id="PTHR46532">
    <property type="entry name" value="MALE FERTILITY FACTOR KL5"/>
    <property type="match status" value="1"/>
</dbReference>
<dbReference type="Pfam" id="PF12774">
    <property type="entry name" value="AAA_6"/>
    <property type="match status" value="1"/>
</dbReference>
<dbReference type="Pfam" id="PF12775">
    <property type="entry name" value="AAA_7"/>
    <property type="match status" value="1"/>
</dbReference>
<dbReference type="Pfam" id="PF12780">
    <property type="entry name" value="AAA_8"/>
    <property type="match status" value="1"/>
</dbReference>
<dbReference type="Pfam" id="PF12781">
    <property type="entry name" value="AAA_9"/>
    <property type="match status" value="1"/>
</dbReference>
<dbReference type="Pfam" id="PF17857">
    <property type="entry name" value="AAA_lid_1"/>
    <property type="match status" value="1"/>
</dbReference>
<dbReference type="Pfam" id="PF18198">
    <property type="entry name" value="AAA_lid_11"/>
    <property type="match status" value="1"/>
</dbReference>
<dbReference type="Pfam" id="PF08385">
    <property type="entry name" value="DHC_N1"/>
    <property type="match status" value="2"/>
</dbReference>
<dbReference type="Pfam" id="PF08393">
    <property type="entry name" value="DHC_N2"/>
    <property type="match status" value="1"/>
</dbReference>
<dbReference type="Pfam" id="PF25007">
    <property type="entry name" value="DYH2-5-8_CC"/>
    <property type="match status" value="1"/>
</dbReference>
<dbReference type="Pfam" id="PF17852">
    <property type="entry name" value="Dynein_AAA_lid"/>
    <property type="match status" value="1"/>
</dbReference>
<dbReference type="Pfam" id="PF18199">
    <property type="entry name" value="Dynein_C"/>
    <property type="match status" value="1"/>
</dbReference>
<dbReference type="Pfam" id="PF03028">
    <property type="entry name" value="Dynein_heavy"/>
    <property type="match status" value="1"/>
</dbReference>
<dbReference type="Pfam" id="PF12777">
    <property type="entry name" value="MT"/>
    <property type="match status" value="1"/>
</dbReference>
<dbReference type="SMART" id="SM00382">
    <property type="entry name" value="AAA"/>
    <property type="match status" value="2"/>
</dbReference>
<dbReference type="SUPFAM" id="SSF52540">
    <property type="entry name" value="P-loop containing nucleoside triphosphate hydrolases"/>
    <property type="match status" value="4"/>
</dbReference>
<evidence type="ECO:0000250" key="1"/>
<evidence type="ECO:0000250" key="2">
    <source>
        <dbReference type="UniProtKB" id="Q9P225"/>
    </source>
</evidence>
<evidence type="ECO:0000255" key="3"/>
<evidence type="ECO:0000256" key="4">
    <source>
        <dbReference type="SAM" id="MobiDB-lite"/>
    </source>
</evidence>
<evidence type="ECO:0000269" key="5">
    <source>
    </source>
</evidence>
<evidence type="ECO:0000305" key="6"/>
<evidence type="ECO:0000312" key="7">
    <source>
        <dbReference type="MGI" id="MGI:107731"/>
    </source>
</evidence>
<reference key="1">
    <citation type="journal article" date="2009" name="PLoS Biol.">
        <title>Lineage-specific biology revealed by a finished genome assembly of the mouse.</title>
        <authorList>
            <person name="Church D.M."/>
            <person name="Goodstadt L."/>
            <person name="Hillier L.W."/>
            <person name="Zody M.C."/>
            <person name="Goldstein S."/>
            <person name="She X."/>
            <person name="Bult C.J."/>
            <person name="Agarwala R."/>
            <person name="Cherry J.L."/>
            <person name="DiCuccio M."/>
            <person name="Hlavina W."/>
            <person name="Kapustin Y."/>
            <person name="Meric P."/>
            <person name="Maglott D."/>
            <person name="Birtle Z."/>
            <person name="Marques A.C."/>
            <person name="Graves T."/>
            <person name="Zhou S."/>
            <person name="Teague B."/>
            <person name="Potamousis K."/>
            <person name="Churas C."/>
            <person name="Place M."/>
            <person name="Herschleb J."/>
            <person name="Runnheim R."/>
            <person name="Forrest D."/>
            <person name="Amos-Landgraf J."/>
            <person name="Schwartz D.C."/>
            <person name="Cheng Z."/>
            <person name="Lindblad-Toh K."/>
            <person name="Eichler E.E."/>
            <person name="Ponting C.P."/>
        </authorList>
    </citation>
    <scope>NUCLEOTIDE SEQUENCE [LARGE SCALE GENOMIC DNA]</scope>
    <source>
        <strain>C57BL/6J</strain>
    </source>
</reference>
<reference key="2">
    <citation type="journal article" date="1997" name="Gene">
        <title>Identification of dynein heavy chain genes expressed in human and mouse testis: chromosomal localization of an axonemal dynein gene.</title>
        <authorList>
            <person name="Neesen J."/>
            <person name="Koehler M.R."/>
            <person name="Kirschner R."/>
            <person name="Steinlein C."/>
            <person name="Kreutzberger J."/>
            <person name="Engel W."/>
            <person name="Schmid M."/>
        </authorList>
    </citation>
    <scope>NUCLEOTIDE SEQUENCE [MRNA] OF 1805-2008</scope>
    <source>
        <strain>NMRI</strain>
        <tissue>Testis</tissue>
    </source>
</reference>
<reference key="3">
    <citation type="journal article" date="2005" name="Science">
        <title>The transcriptional landscape of the mammalian genome.</title>
        <authorList>
            <person name="Carninci P."/>
            <person name="Kasukawa T."/>
            <person name="Katayama S."/>
            <person name="Gough J."/>
            <person name="Frith M.C."/>
            <person name="Maeda N."/>
            <person name="Oyama R."/>
            <person name="Ravasi T."/>
            <person name="Lenhard B."/>
            <person name="Wells C."/>
            <person name="Kodzius R."/>
            <person name="Shimokawa K."/>
            <person name="Bajic V.B."/>
            <person name="Brenner S.E."/>
            <person name="Batalov S."/>
            <person name="Forrest A.R."/>
            <person name="Zavolan M."/>
            <person name="Davis M.J."/>
            <person name="Wilming L.G."/>
            <person name="Aidinis V."/>
            <person name="Allen J.E."/>
            <person name="Ambesi-Impiombato A."/>
            <person name="Apweiler R."/>
            <person name="Aturaliya R.N."/>
            <person name="Bailey T.L."/>
            <person name="Bansal M."/>
            <person name="Baxter L."/>
            <person name="Beisel K.W."/>
            <person name="Bersano T."/>
            <person name="Bono H."/>
            <person name="Chalk A.M."/>
            <person name="Chiu K.P."/>
            <person name="Choudhary V."/>
            <person name="Christoffels A."/>
            <person name="Clutterbuck D.R."/>
            <person name="Crowe M.L."/>
            <person name="Dalla E."/>
            <person name="Dalrymple B.P."/>
            <person name="de Bono B."/>
            <person name="Della Gatta G."/>
            <person name="di Bernardo D."/>
            <person name="Down T."/>
            <person name="Engstrom P."/>
            <person name="Fagiolini M."/>
            <person name="Faulkner G."/>
            <person name="Fletcher C.F."/>
            <person name="Fukushima T."/>
            <person name="Furuno M."/>
            <person name="Futaki S."/>
            <person name="Gariboldi M."/>
            <person name="Georgii-Hemming P."/>
            <person name="Gingeras T.R."/>
            <person name="Gojobori T."/>
            <person name="Green R.E."/>
            <person name="Gustincich S."/>
            <person name="Harbers M."/>
            <person name="Hayashi Y."/>
            <person name="Hensch T.K."/>
            <person name="Hirokawa N."/>
            <person name="Hill D."/>
            <person name="Huminiecki L."/>
            <person name="Iacono M."/>
            <person name="Ikeo K."/>
            <person name="Iwama A."/>
            <person name="Ishikawa T."/>
            <person name="Jakt M."/>
            <person name="Kanapin A."/>
            <person name="Katoh M."/>
            <person name="Kawasawa Y."/>
            <person name="Kelso J."/>
            <person name="Kitamura H."/>
            <person name="Kitano H."/>
            <person name="Kollias G."/>
            <person name="Krishnan S.P."/>
            <person name="Kruger A."/>
            <person name="Kummerfeld S.K."/>
            <person name="Kurochkin I.V."/>
            <person name="Lareau L.F."/>
            <person name="Lazarevic D."/>
            <person name="Lipovich L."/>
            <person name="Liu J."/>
            <person name="Liuni S."/>
            <person name="McWilliam S."/>
            <person name="Madan Babu M."/>
            <person name="Madera M."/>
            <person name="Marchionni L."/>
            <person name="Matsuda H."/>
            <person name="Matsuzawa S."/>
            <person name="Miki H."/>
            <person name="Mignone F."/>
            <person name="Miyake S."/>
            <person name="Morris K."/>
            <person name="Mottagui-Tabar S."/>
            <person name="Mulder N."/>
            <person name="Nakano N."/>
            <person name="Nakauchi H."/>
            <person name="Ng P."/>
            <person name="Nilsson R."/>
            <person name="Nishiguchi S."/>
            <person name="Nishikawa S."/>
            <person name="Nori F."/>
            <person name="Ohara O."/>
            <person name="Okazaki Y."/>
            <person name="Orlando V."/>
            <person name="Pang K.C."/>
            <person name="Pavan W.J."/>
            <person name="Pavesi G."/>
            <person name="Pesole G."/>
            <person name="Petrovsky N."/>
            <person name="Piazza S."/>
            <person name="Reed J."/>
            <person name="Reid J.F."/>
            <person name="Ring B.Z."/>
            <person name="Ringwald M."/>
            <person name="Rost B."/>
            <person name="Ruan Y."/>
            <person name="Salzberg S.L."/>
            <person name="Sandelin A."/>
            <person name="Schneider C."/>
            <person name="Schoenbach C."/>
            <person name="Sekiguchi K."/>
            <person name="Semple C.A."/>
            <person name="Seno S."/>
            <person name="Sessa L."/>
            <person name="Sheng Y."/>
            <person name="Shibata Y."/>
            <person name="Shimada H."/>
            <person name="Shimada K."/>
            <person name="Silva D."/>
            <person name="Sinclair B."/>
            <person name="Sperling S."/>
            <person name="Stupka E."/>
            <person name="Sugiura K."/>
            <person name="Sultana R."/>
            <person name="Takenaka Y."/>
            <person name="Taki K."/>
            <person name="Tammoja K."/>
            <person name="Tan S.L."/>
            <person name="Tang S."/>
            <person name="Taylor M.S."/>
            <person name="Tegner J."/>
            <person name="Teichmann S.A."/>
            <person name="Ueda H.R."/>
            <person name="van Nimwegen E."/>
            <person name="Verardo R."/>
            <person name="Wei C.L."/>
            <person name="Yagi K."/>
            <person name="Yamanishi H."/>
            <person name="Zabarovsky E."/>
            <person name="Zhu S."/>
            <person name="Zimmer A."/>
            <person name="Hide W."/>
            <person name="Bult C."/>
            <person name="Grimmond S.M."/>
            <person name="Teasdale R.D."/>
            <person name="Liu E.T."/>
            <person name="Brusic V."/>
            <person name="Quackenbush J."/>
            <person name="Wahlestedt C."/>
            <person name="Mattick J.S."/>
            <person name="Hume D.A."/>
            <person name="Kai C."/>
            <person name="Sasaki D."/>
            <person name="Tomaru Y."/>
            <person name="Fukuda S."/>
            <person name="Kanamori-Katayama M."/>
            <person name="Suzuki M."/>
            <person name="Aoki J."/>
            <person name="Arakawa T."/>
            <person name="Iida J."/>
            <person name="Imamura K."/>
            <person name="Itoh M."/>
            <person name="Kato T."/>
            <person name="Kawaji H."/>
            <person name="Kawagashira N."/>
            <person name="Kawashima T."/>
            <person name="Kojima M."/>
            <person name="Kondo S."/>
            <person name="Konno H."/>
            <person name="Nakano K."/>
            <person name="Ninomiya N."/>
            <person name="Nishio T."/>
            <person name="Okada M."/>
            <person name="Plessy C."/>
            <person name="Shibata K."/>
            <person name="Shiraki T."/>
            <person name="Suzuki S."/>
            <person name="Tagami M."/>
            <person name="Waki K."/>
            <person name="Watahiki A."/>
            <person name="Okamura-Oho Y."/>
            <person name="Suzuki H."/>
            <person name="Kawai J."/>
            <person name="Hayashizaki Y."/>
        </authorList>
    </citation>
    <scope>NUCLEOTIDE SEQUENCE [LARGE SCALE MRNA] OF 2794-4456</scope>
    <source>
        <strain>C57BL/6J</strain>
        <tissue>Testis</tissue>
    </source>
</reference>
<reference key="4">
    <citation type="journal article" date="2010" name="Cell">
        <title>A tissue-specific atlas of mouse protein phosphorylation and expression.</title>
        <authorList>
            <person name="Huttlin E.L."/>
            <person name="Jedrychowski M.P."/>
            <person name="Elias J.E."/>
            <person name="Goswami T."/>
            <person name="Rad R."/>
            <person name="Beausoleil S.A."/>
            <person name="Villen J."/>
            <person name="Haas W."/>
            <person name="Sowa M.E."/>
            <person name="Gygi S.P."/>
        </authorList>
    </citation>
    <scope>IDENTIFICATION BY MASS SPECTROMETRY [LARGE SCALE ANALYSIS]</scope>
    <source>
        <tissue>Testis</tissue>
    </source>
</reference>
<reference key="5">
    <citation type="journal article" date="2019" name="J. Mol. Cell Biol.">
        <title>Vertebrate Dynein-f depends on Wdr78 for axonemal localization and is essential for ciliary beat.</title>
        <authorList>
            <person name="Zhang Y."/>
            <person name="Chen Y."/>
            <person name="Zheng J."/>
            <person name="Wang J."/>
            <person name="Duan S."/>
            <person name="Zhang W."/>
            <person name="Yan X."/>
            <person name="Zhu X."/>
        </authorList>
    </citation>
    <scope>FUNCTION</scope>
    <scope>INTERACTION WITH DNAI4</scope>
    <scope>SUBCELLULAR LOCATION</scope>
</reference>
<accession>P0C6F1</accession>
<accession>B1AR18</accession>
<accession>O08826</accession>
<accession>Q8C0U5</accession>
<sequence>MASKAEKKRKVAGRGGARAGRVVRAPQSTAGPGATEASLLPDGQEPEPESGKEDSVLGLQAFASWRLTPALHGEANTPPTLLHPQPLFHRRLTTLNLILSCSRAGTRDLALKPFFLSRTMLTGLADATWTGEHDMVLEHFVQDPAVPALTIFIDPVFGLKLELGMPVQTQNQIVYFIRQAPVPITPENFEETVQYGTVRGAYIPALLRLLSGVYVPQIFMNKSWPESIRNHFVSHLHRFLASLTDTRYKLEGHTVLYIPAEAVQMDPEVVVKDKELVQRLETSMIHWTRQIKEVLSAQESVETGENLGPLEEIEFWHNRCMDLSSISKQLVKKGVKHIESILFLAKSSYLTPFRKLAQQIQDGSRQAQSNLTFLSILREPYQELAFMKPKDISEKLPKLISLIRIIWVNSPHYNTRERLTALFRKVCECQYHFARWEDGKQGPLPCFFGAQGPQITRNLLEIEDIFHKNLQTLRAVRGGILDVKNTSWHEDYNKFRGGIKDLEVMTQNLITSAFELVRDVEHGVLLLDTFHRLATREAIMRTYEKKAVDLYMLFNSELALVNRELNKKWPYLEPYMTQYSGQAHWVRILRRRIDRVMNCLSGAHFLPHIGTGEESIHTYQQMAQAIDEMVRKTFQEWTATLDKDCIRRLDMSLLRISQEKVGMLDVNFDKTLLILFAEIDYWERLLFETPHYVMNVAERAEDLRILRENLLLVARDYNRIIAMLSPDEQALFKERIRFLDKKIHPGLKKLNWALKGASAFFITECRMHASKVQMIVNDFKASTLTIGWKAQEMSELLLVHITGKQVYRDLEFEEAQREHRMAAQQKLVKLHQDVVNIMTNSYEVFKNDGPEIQQQWLLYTIRLDHMMEDALRLNVKWSLLELSKAINGDGKTTPNPLFRVLVILQNDVRGGGSQVEFSPTLQTLASVVNDIGSHLFATISVFRHLPDILTKRKMNREPIYVLVERDEDIRKIQAQISSGMTNNASLLQNYLKTWDMYREIWEINKDSFIRRYQRLNPPVSSFDADIARYTEVANNVQKEETVLNIQFVMLDCSHLKFSLVQHCNEWQNKFTTLLKEMAAGRLADLHSYLKDNAEKISHPPQTLEELGVSLQLMDTLQHDLPNLETQIPPIHEQFTILEKYEVPVPDTVLEMLESLNGEWLTFQQILLDSEQMLKKHKEKFKTGLIHAADDFKKKAHNLLEDFEFKGPFTSTVGHTAALDQIAQMRAMLMAMRDEENNLRSNLGIFKIEQPVSKDLQILEKELDALQQVWEITRDWEESWNQWKMGCFQTLQTEAMESMAHGLFRRLTRLAKEYKDRNWEIIETTRSKIEQFKRTMPLISDLRNPALRERHWDQVKEEVQREFDQESESFTLEQIVKLGMDQHVEKIAEISASATKELAIEVGLQNIAKTWDSTQLDIVPYKDKGHHRLRGTEEVFQALEDNQVALSTMKASRFVKAFEKDVDHWERCLSLILEVIEMVLTVQRQWMYLENIFLGEDIRKQLPNESALFDQVNNNWKAIMDRMNKDNNALRSTHYPGLLETLIEMNAILEDIQKSLDMYLETKRHIFPRFYFLSNDDLLEILGQSRNPEAVQPHLKKCFDNIKLLKIQKVGGSSSKWEAVGMFSGDGEYIDFLHPVLLEGPVESWLGDVERAMRMTLRDLLRNCRVALKKFLNKRDKWVKDWAGQVVITASQIQWTADVTKCLMTAKERSDKKILKVSILNKYSEAIRGNLTKIMRLKIVALVTIEIHARDVLEKLYKSGLMDVSSFDWLSQLRFYWEKDVDDCIIRQTNTQFQYGYEYLGNSGRLVITPLTDRCYMTLTTALHLHRGGSPKGPAGTGKTETVKDLGKALGIYVIVVNCSEGLDYKSMGRMYSGLAQSGAWGCFDEFNRINIEVLSVVAQQILSILSALTANLTRFYFEGFEINLVWSCGIFITMNPGYAGRTELPENLKSMFRPIAMVVPDSTLIAEIILFGEGFGNCKILAKKVYTLYSLAVQQLSRQDHYDFGLRALTSLLRYAGKKRRLQPDLSDEEVLLLSMRDMNIAKLTSVDVPLFNAIVQDLFPNIELPVIDYGKLRDTIEQEIREMGLQITPFTLTKVLQLYETKNSRHSTMIVGGTGSSKTTSWKILQASLTSLCRAGEPNYNIVREFPLNPKALSLGELYGEYDLNTNEWTDGILSSVMRVACADEKPDEKWILFDGPVDTLWIESMNSVMDDNKVLTLINGERIAMPEQVSLLFEVENLAVASPATVSRCGMVYTDYVDLGWKPYVQSWLEKRPKTEVEPLQRMFEKFINKILSFKKDNCNELVPVPEYSGIISLCKLYTVLATPENGVNPADAENYSFMVEMTFVFSMIWSVCASVDEDGRKKIDSYLREIEGSFPNKDTVYEYYVNPKMRTWTSFEEKLPKSWRYPPNAPFYKIMVPTVDTVRYNYLVSTLVANQNPVLLVGPVGTGKTSIAQSVLQSLPSSQWSVLVVNMSAQTTSNNVQSIIESRVEKRTKGVYVPFGGKSMITFMDDLNMPAKDMFGSQPPLELIRLWIDYGFWYDRVKQSIKHIRDMFLMAAMGPPGGGRTVISPRLQSRFNIINMTFPTESQIIRIFGTMINQKLQDFEEEVKPIGNVVTEATLDVYNTVVQRFLPTPAKIHYLFNLRDISKVFQGMLRANKDFHDTKASITRLWIHECFRVFSDRLVDTADMEAFMGILSDKLGTFFDLTFHHLCPNKRPPIFGDFLKEPKVYEDLVDLTVLKTAMETALNEYNLSPSVVPMQLVLFREAIEHITRIVRVIGQPRGNMLLVGIGGSGRQSLARLASSICDYNTFQIEVTKHYRKQEFRDDIKRLYRQAGVELQTTSFLFVDTQIADESFLEDINNILSSGEVPNLYKSDEFEEIQNHIIDQARAEQIPESSDSLFAYLIERVRNNLHIVLCLSPVGDPFRNWIRQYPALVNCTTINWFSEWPREALLEVAEKYIIGVDLGTQENIHRKVAQIFVTMHWSVAQYSQKMLLELRRYNYVTPTNYLELVSGYKKLLGEKRQELLDQANKLRTGLFKIDETREKVEVMSLELEDAKKKVAEFQKQCEEYLVIIVQQKREADEQQKAVTANSEKIAIEEVKCQALADNAQKDLEEALPALEEAMRALESLNKKDIGEIKSYGRPPAQVEIVMQAVMILRGNEPTWAEAKRQLGEQNFIKSLINFDKDNISDKVLKKIGAYCAQPDFQPDIIGRVSLAAKSLCMWVRAMELYGRLYRVVEPKRIRMNAAMAQLQEKQAALAEAQEKLREVAEKLEMLKKQYDEKLAQKEELRKKSEEMELKLERAGMLVSGLAGEKARWEETVQGLEEDLGYLVGDCLIAAAFLSYMGPFLTNYRDEIINQIWIRKIRELQVPCSPRFAIDNFLTNPTKVRDWNIQGLPSDAFSTENGIIVTRGNRWALMIDPQGQALKWIKNMEGNQGLKIIDLQMHDYLRVLEHAIQFGFPVLLQNVQEYLDPTLNPVLNKSVARIGGRMLIRIGDKEVEYNPNFRFYLTTKLSNPHYNPETSAKTTIVNFAVKEQGLEAQLLGIVVRKERPELEEQKDSLVINIAAGKRKLKELEDEILRLLNEATGSLLDDVQLVNTLQTSKITATEVTEQLETSETTEINIDLAREAYRPCAQRASVLFFVLNDMGRIDPMYQFSLDAYIGLFILSIDKSHRSNKLEDRIEYLNDYHTYAVYRYTCRTLFERHKLLFSFHMCAKILETSGKLNMDEYNFFLRGGVVLDREGQMDNPCTSWLADAYWDNITELDKLTNFHGLMNSFEQYPRDWHLWYTNSSPEKAMLPGEWENACNEMQRMLIVRSLRQDRVAFCVTSFIVSNLGSRFIEPPVLNMKSVMEDSTPRSPLVFILSPGVDPTSALLQLAEHTGMAHRFHALSLGQGQAPIAARLLREGVNQGHWVFLANCHLSLSWMPNLDKLVEQLQVEDPHPSFRLWLSSSPHPDFPISILQASIKMTTEPPKGLKANMTRLYQLMTEAQFTHCSKPAKYKKLLFALCFFHSILLERKKFLQLGWNIIYGFNDSDFEVSENLLSLYLDEYEETPWDALKYLIAGVNYGGHVTDDWDRRLLTTYINDYFCDLSLTTPFYRLSVLDTYYIPKDGSLASYKEYISMLPSMDPPEAFGQHPNADVASQITEARTLFETLLSLQPQITPTRVGGQSREEKVLELAADVKQKIPEMIDYEGTRKLLALDPSPLNVVLLQEIQRYNKLMKTILFSLTDLEKGIQGLIVMSTSLEEIFNCIFDAHVPPLWGKVYPSQKPLASWTRDLAVRVEQFETWASRARPPVLFWLSGFTFPTGFLTAVLQSAARQNNISVDSLSWEFIVSTVDDSNLVYPPKDGVWVRGLYLEGAGWDRKNSCLVEAEPMQLVCLMPTIHFRPAESRKKSAKGMYSCPCYYYPNRAGSTDRASFVIGIDLRSGSMTSDHWIKRGTALLMSLDS</sequence>
<name>DYH2_MOUSE</name>
<gene>
    <name evidence="7" type="primary">Dnah2</name>
    <name type="synonym">Dnahc2</name>
</gene>
<organism>
    <name type="scientific">Mus musculus</name>
    <name type="common">Mouse</name>
    <dbReference type="NCBI Taxonomy" id="10090"/>
    <lineage>
        <taxon>Eukaryota</taxon>
        <taxon>Metazoa</taxon>
        <taxon>Chordata</taxon>
        <taxon>Craniata</taxon>
        <taxon>Vertebrata</taxon>
        <taxon>Euteleostomi</taxon>
        <taxon>Mammalia</taxon>
        <taxon>Eutheria</taxon>
        <taxon>Euarchontoglires</taxon>
        <taxon>Glires</taxon>
        <taxon>Rodentia</taxon>
        <taxon>Myomorpha</taxon>
        <taxon>Muroidea</taxon>
        <taxon>Muridae</taxon>
        <taxon>Murinae</taxon>
        <taxon>Mus</taxon>
        <taxon>Mus</taxon>
    </lineage>
</organism>
<protein>
    <recommendedName>
        <fullName evidence="6">Dynein axonemal heavy chain 2</fullName>
    </recommendedName>
    <alternativeName>
        <fullName>Axonemal beta dynein heavy chain 2</fullName>
    </alternativeName>
    <alternativeName>
        <fullName>Ciliary dynein heavy chain 2</fullName>
    </alternativeName>
</protein>
<keyword id="KW-0067">ATP-binding</keyword>
<keyword id="KW-0966">Cell projection</keyword>
<keyword id="KW-0969">Cilium</keyword>
<keyword id="KW-0175">Coiled coil</keyword>
<keyword id="KW-0963">Cytoplasm</keyword>
<keyword id="KW-0206">Cytoskeleton</keyword>
<keyword id="KW-0243">Dynein</keyword>
<keyword id="KW-0282">Flagellum</keyword>
<keyword id="KW-0493">Microtubule</keyword>
<keyword id="KW-0505">Motor protein</keyword>
<keyword id="KW-0547">Nucleotide-binding</keyword>
<keyword id="KW-1185">Reference proteome</keyword>
<keyword id="KW-0677">Repeat</keyword>
<keyword id="KW-0802">TPR repeat</keyword>
<comment type="function">
    <text evidence="2 5">As part of the axonemal inner dynein arm complex plays a central role in ciliary beat (PubMed:30060180). Expressed in sperm flagellum, it is required for sperm motility (By similarity). Dyneins are microtubule-based molecular motors possessing ATPase activities that can convert the chemical energy of ATP into relative sliding between adjacent microtubule doublets to generate ciliary bending (PubMed:30060180).</text>
</comment>
<comment type="subunit">
    <text evidence="5">Part of the axonemal inner dynein arm complex that consists of at least two heavy chains and a number of intermediate and light chains (PubMed:30060180). Interacts with DNAI4 (PubMed:30060180).</text>
</comment>
<comment type="subcellular location">
    <subcellularLocation>
        <location evidence="5">Cytoplasm</location>
        <location evidence="5">Cytoskeleton</location>
        <location evidence="5">Cilium axoneme</location>
    </subcellularLocation>
    <subcellularLocation>
        <location evidence="2">Cytoplasm</location>
        <location evidence="2">Cytoskeleton</location>
        <location evidence="2">Flagellum axoneme</location>
    </subcellularLocation>
</comment>
<comment type="domain">
    <text evidence="1">Dynein heavy chains probably consist of an N-terminal stem (which binds cargo and interacts with other dynein components), and the head or motor domain. The motor contains six tandemly-linked AAA domains in the head, which form a ring. A stalk-like structure (formed by two of the coiled coil domains) protrudes between AAA 4 and AAA 5 and terminates in a microtubule-binding site. A seventh domain may also contribute to this ring; it is not clear whether the N-terminus or the C-terminus forms this extra domain. There are four well-conserved and two non-conserved ATPase sites, one per AAA domain. Probably only one of these (within AAA 1) actually hydrolyzes ATP, the others may serve a regulatory function (By similarity).</text>
</comment>
<comment type="similarity">
    <text evidence="6">Belongs to the dynein heavy chain family.</text>
</comment>
<comment type="sequence caution" evidence="6">
    <conflict type="erroneous initiation">
        <sequence resource="EMBL-CDS" id="BAC26619"/>
    </conflict>
    <text>Truncated N-terminus.</text>
</comment>
<feature type="chain" id="PRO_0000322543" description="Dynein axonemal heavy chain 2">
    <location>
        <begin position="1"/>
        <end position="4456"/>
    </location>
</feature>
<feature type="repeat" description="TPR 1">
    <location>
        <begin position="1439"/>
        <end position="1474"/>
    </location>
</feature>
<feature type="repeat" description="TPR 2">
    <location>
        <begin position="2750"/>
        <end position="2783"/>
    </location>
</feature>
<feature type="repeat" description="TPR 3">
    <location>
        <begin position="3101"/>
        <end position="3134"/>
    </location>
</feature>
<feature type="repeat" description="TPR 4">
    <location>
        <begin position="4101"/>
        <end position="4134"/>
    </location>
</feature>
<feature type="repeat" description="TPR 5">
    <location>
        <begin position="4135"/>
        <end position="4169"/>
    </location>
</feature>
<feature type="region of interest" description="Stem" evidence="1">
    <location>
        <begin position="1"/>
        <end position="1795"/>
    </location>
</feature>
<feature type="region of interest" description="Disordered" evidence="4">
    <location>
        <begin position="1"/>
        <end position="55"/>
    </location>
</feature>
<feature type="region of interest" description="AAA 1" evidence="1">
    <location>
        <begin position="1794"/>
        <end position="2015"/>
    </location>
</feature>
<feature type="region of interest" description="AAA 2" evidence="1">
    <location>
        <begin position="2075"/>
        <end position="2302"/>
    </location>
</feature>
<feature type="region of interest" description="AAA 3" evidence="1">
    <location>
        <begin position="2407"/>
        <end position="2654"/>
    </location>
</feature>
<feature type="region of interest" description="AAA 4" evidence="1">
    <location>
        <begin position="2751"/>
        <end position="3003"/>
    </location>
</feature>
<feature type="region of interest" description="Stalk" evidence="1">
    <location>
        <begin position="3018"/>
        <end position="3301"/>
    </location>
</feature>
<feature type="region of interest" description="AAA 5" evidence="1">
    <location>
        <begin position="3387"/>
        <end position="3617"/>
    </location>
</feature>
<feature type="region of interest" description="AAA 6" evidence="1">
    <location>
        <begin position="3833"/>
        <end position="4052"/>
    </location>
</feature>
<feature type="coiled-coil region" evidence="3">
    <location>
        <begin position="1218"/>
        <end position="1274"/>
    </location>
</feature>
<feature type="coiled-coil region" evidence="3">
    <location>
        <begin position="3041"/>
        <end position="3078"/>
    </location>
</feature>
<feature type="coiled-coil region" evidence="3">
    <location>
        <begin position="3245"/>
        <end position="3333"/>
    </location>
</feature>
<feature type="coiled-coil region" evidence="3">
    <location>
        <begin position="3552"/>
        <end position="3596"/>
    </location>
</feature>
<feature type="compositionally biased region" description="Basic residues" evidence="4">
    <location>
        <begin position="1"/>
        <end position="12"/>
    </location>
</feature>
<feature type="binding site" evidence="3">
    <location>
        <begin position="1832"/>
        <end position="1839"/>
    </location>
    <ligand>
        <name>ATP</name>
        <dbReference type="ChEBI" id="CHEBI:30616"/>
    </ligand>
</feature>
<feature type="binding site" evidence="3">
    <location>
        <begin position="2113"/>
        <end position="2120"/>
    </location>
    <ligand>
        <name>ATP</name>
        <dbReference type="ChEBI" id="CHEBI:30616"/>
    </ligand>
</feature>
<feature type="binding site" evidence="3">
    <location>
        <begin position="2445"/>
        <end position="2452"/>
    </location>
    <ligand>
        <name>ATP</name>
        <dbReference type="ChEBI" id="CHEBI:30616"/>
    </ligand>
</feature>
<feature type="binding site" evidence="3">
    <location>
        <begin position="2791"/>
        <end position="2798"/>
    </location>
    <ligand>
        <name>ATP</name>
        <dbReference type="ChEBI" id="CHEBI:30616"/>
    </ligand>
</feature>
<feature type="sequence conflict" description="In Ref. 2; CAB06067." evidence="6" ref="2">
    <original>V</original>
    <variation>L</variation>
    <location>
        <position position="1893"/>
    </location>
</feature>
<feature type="sequence conflict" description="In Ref. 2; CAB06067." evidence="6" ref="2">
    <original>S</original>
    <variation>P</variation>
    <location>
        <position position="1895"/>
    </location>
</feature>
<feature type="sequence conflict" description="In Ref. 2; CAB06067." evidence="6" ref="2">
    <original>A</original>
    <variation>P</variation>
    <location>
        <position position="1898"/>
    </location>
</feature>
<feature type="sequence conflict" description="In Ref. 2; CAB06067." evidence="6" ref="2">
    <original>Q</original>
    <variation>K</variation>
    <location>
        <position position="1900"/>
    </location>
</feature>
<feature type="sequence conflict" description="In Ref. 2; CAB06067." evidence="6" ref="2">
    <original>T</original>
    <variation>S</variation>
    <location>
        <position position="1909"/>
    </location>
</feature>
<feature type="sequence conflict" description="In Ref. 2; CAB06067." evidence="6" ref="2">
    <original>F</original>
    <variation>Y</variation>
    <location>
        <position position="2004"/>
    </location>
</feature>
<feature type="sequence conflict" description="In Ref. 2; CAB06067." evidence="6" ref="2">
    <original>L</original>
    <variation>M</variation>
    <location>
        <position position="2006"/>
    </location>
</feature>
<feature type="sequence conflict" description="In Ref. 2; CAB06067." evidence="6" ref="2">
    <original>R</original>
    <variation>S</variation>
    <location>
        <position position="2007"/>
    </location>
</feature>